<comment type="function">
    <text evidence="1">Component of the proteasome core, a large protease complex with broad specificity involved in protein degradation.</text>
</comment>
<comment type="activity regulation">
    <text evidence="1">The formation of the proteasomal ATPase ARC-20S proteasome complex, likely via the docking of the C-termini of ARC into the intersubunit pockets in the alpha-rings, may trigger opening of the gate for substrate entry. Interconversion between the open-gate and close-gate conformations leads to a dynamic regulation of the 20S proteasome proteolysis activity.</text>
</comment>
<comment type="pathway">
    <text evidence="1">Protein degradation; proteasomal Pup-dependent pathway.</text>
</comment>
<comment type="subunit">
    <text evidence="1">The 20S proteasome core is composed of 14 alpha and 14 beta subunits that assemble into four stacked heptameric rings, resulting in a barrel-shaped structure. The two inner rings, each composed of seven catalytic beta subunits, are sandwiched by two outer rings, each composed of seven alpha subunits. The catalytic chamber with the active sites is on the inside of the barrel. Has a gated structure, the ends of the cylinder being occluded by the N-termini of the alpha-subunits. Is capped by the proteasome-associated ATPase, ARC.</text>
</comment>
<comment type="subcellular location">
    <subcellularLocation>
        <location evidence="1">Cytoplasm</location>
    </subcellularLocation>
</comment>
<comment type="similarity">
    <text evidence="1">Belongs to the peptidase T1A family.</text>
</comment>
<proteinExistence type="inferred from homology"/>
<name>PSA_MYCA1</name>
<sequence length="256" mass="28078">MSFPYFISPEQAMRERSELARKGIARGKSVVALVYAGGVLFVAENPSRSLQKISELYDRVGFAAAGKFNEFDNLRRGGIQFADTRGYAYDRRDVTGRQLANVYAQTLGTIFTEQAKPYEVELCVAEVAHYGETKPPELYRITYDGSIADEPHFVVMGGTTEPITTALKDSYAENANLREATRIAVRALRAGSESSNGDQSALDVGSLEVAILDVNRPRRAFRRINRPTLENLLRELDSNGSDGNGDAPELNGGSSD</sequence>
<dbReference type="EMBL" id="CP000479">
    <property type="protein sequence ID" value="ABK69021.1"/>
    <property type="molecule type" value="Genomic_DNA"/>
</dbReference>
<dbReference type="RefSeq" id="WP_003878079.1">
    <property type="nucleotide sequence ID" value="NC_008595.1"/>
</dbReference>
<dbReference type="SMR" id="A0QFB6"/>
<dbReference type="MEROPS" id="T01.980"/>
<dbReference type="KEGG" id="mav:MAV_2405"/>
<dbReference type="HOGENOM" id="CLU_071031_0_0_11"/>
<dbReference type="UniPathway" id="UPA00997"/>
<dbReference type="Proteomes" id="UP000001574">
    <property type="component" value="Chromosome"/>
</dbReference>
<dbReference type="GO" id="GO:0005737">
    <property type="term" value="C:cytoplasm"/>
    <property type="evidence" value="ECO:0007669"/>
    <property type="project" value="UniProtKB-SubCell"/>
</dbReference>
<dbReference type="GO" id="GO:0019773">
    <property type="term" value="C:proteasome core complex, alpha-subunit complex"/>
    <property type="evidence" value="ECO:0007669"/>
    <property type="project" value="UniProtKB-UniRule"/>
</dbReference>
<dbReference type="GO" id="GO:0004298">
    <property type="term" value="F:threonine-type endopeptidase activity"/>
    <property type="evidence" value="ECO:0007669"/>
    <property type="project" value="InterPro"/>
</dbReference>
<dbReference type="GO" id="GO:0019941">
    <property type="term" value="P:modification-dependent protein catabolic process"/>
    <property type="evidence" value="ECO:0007669"/>
    <property type="project" value="UniProtKB-UniRule"/>
</dbReference>
<dbReference type="GO" id="GO:0010498">
    <property type="term" value="P:proteasomal protein catabolic process"/>
    <property type="evidence" value="ECO:0007669"/>
    <property type="project" value="UniProtKB-UniRule"/>
</dbReference>
<dbReference type="CDD" id="cd01906">
    <property type="entry name" value="proteasome_protease_HslV"/>
    <property type="match status" value="1"/>
</dbReference>
<dbReference type="FunFam" id="3.60.20.10:FF:000023">
    <property type="entry name" value="Proteasome subunit alpha"/>
    <property type="match status" value="1"/>
</dbReference>
<dbReference type="Gene3D" id="3.60.20.10">
    <property type="entry name" value="Glutamine Phosphoribosylpyrophosphate, subunit 1, domain 1"/>
    <property type="match status" value="1"/>
</dbReference>
<dbReference type="HAMAP" id="MF_00289_B">
    <property type="entry name" value="Proteasome_A_B"/>
    <property type="match status" value="1"/>
</dbReference>
<dbReference type="InterPro" id="IPR029055">
    <property type="entry name" value="Ntn_hydrolases_N"/>
</dbReference>
<dbReference type="InterPro" id="IPR050115">
    <property type="entry name" value="Proteasome_alpha"/>
</dbReference>
<dbReference type="InterPro" id="IPR023332">
    <property type="entry name" value="Proteasome_alpha-type"/>
</dbReference>
<dbReference type="InterPro" id="IPR022296">
    <property type="entry name" value="Proteasome_asu_bac"/>
</dbReference>
<dbReference type="InterPro" id="IPR001353">
    <property type="entry name" value="Proteasome_sua/b"/>
</dbReference>
<dbReference type="NCBIfam" id="TIGR03691">
    <property type="entry name" value="20S_bact_alpha"/>
    <property type="match status" value="1"/>
</dbReference>
<dbReference type="PANTHER" id="PTHR11599">
    <property type="entry name" value="PROTEASOME SUBUNIT ALPHA/BETA"/>
    <property type="match status" value="1"/>
</dbReference>
<dbReference type="Pfam" id="PF00227">
    <property type="entry name" value="Proteasome"/>
    <property type="match status" value="1"/>
</dbReference>
<dbReference type="SUPFAM" id="SSF56235">
    <property type="entry name" value="N-terminal nucleophile aminohydrolases (Ntn hydrolases)"/>
    <property type="match status" value="1"/>
</dbReference>
<dbReference type="PROSITE" id="PS51475">
    <property type="entry name" value="PROTEASOME_ALPHA_2"/>
    <property type="match status" value="1"/>
</dbReference>
<reference key="1">
    <citation type="submission" date="2006-10" db="EMBL/GenBank/DDBJ databases">
        <authorList>
            <person name="Fleischmann R.D."/>
            <person name="Dodson R.J."/>
            <person name="Haft D.H."/>
            <person name="Merkel J.S."/>
            <person name="Nelson W.C."/>
            <person name="Fraser C.M."/>
        </authorList>
    </citation>
    <scope>NUCLEOTIDE SEQUENCE [LARGE SCALE GENOMIC DNA]</scope>
    <source>
        <strain>104</strain>
    </source>
</reference>
<protein>
    <recommendedName>
        <fullName evidence="1">Proteasome subunit alpha</fullName>
    </recommendedName>
    <alternativeName>
        <fullName evidence="1">20S proteasome alpha subunit</fullName>
    </alternativeName>
    <alternativeName>
        <fullName evidence="1">Proteasome core protein PrcA</fullName>
    </alternativeName>
</protein>
<gene>
    <name evidence="1" type="primary">prcA</name>
    <name type="ordered locus">MAV_2405</name>
</gene>
<feature type="chain" id="PRO_0000397146" description="Proteasome subunit alpha">
    <location>
        <begin position="1"/>
        <end position="256"/>
    </location>
</feature>
<feature type="region of interest" description="Disordered" evidence="2">
    <location>
        <begin position="235"/>
        <end position="256"/>
    </location>
</feature>
<keyword id="KW-0963">Cytoplasm</keyword>
<keyword id="KW-0647">Proteasome</keyword>
<evidence type="ECO:0000255" key="1">
    <source>
        <dbReference type="HAMAP-Rule" id="MF_00289"/>
    </source>
</evidence>
<evidence type="ECO:0000256" key="2">
    <source>
        <dbReference type="SAM" id="MobiDB-lite"/>
    </source>
</evidence>
<accession>A0QFB6</accession>
<organism>
    <name type="scientific">Mycobacterium avium (strain 104)</name>
    <dbReference type="NCBI Taxonomy" id="243243"/>
    <lineage>
        <taxon>Bacteria</taxon>
        <taxon>Bacillati</taxon>
        <taxon>Actinomycetota</taxon>
        <taxon>Actinomycetes</taxon>
        <taxon>Mycobacteriales</taxon>
        <taxon>Mycobacteriaceae</taxon>
        <taxon>Mycobacterium</taxon>
        <taxon>Mycobacterium avium complex (MAC)</taxon>
    </lineage>
</organism>